<dbReference type="EC" id="3.4.24.69" evidence="2"/>
<dbReference type="EMBL" id="CP032455">
    <property type="protein sequence ID" value="QEZ70852.1"/>
    <property type="molecule type" value="Genomic_DNA"/>
</dbReference>
<dbReference type="RefSeq" id="WP_150887772.1">
    <property type="nucleotide sequence ID" value="NZ_CM017269.1"/>
</dbReference>
<dbReference type="PDB" id="6HOX">
    <property type="method" value="X-ray"/>
    <property type="resolution" value="1.95 A"/>
    <property type="chains" value="A=1-329"/>
</dbReference>
<dbReference type="PDBsum" id="6HOX"/>
<dbReference type="SMR" id="A0A5P3XKQ1"/>
<dbReference type="Proteomes" id="UP000326961">
    <property type="component" value="Plasmid pPbmMP"/>
</dbReference>
<dbReference type="GO" id="GO:0005576">
    <property type="term" value="C:extracellular region"/>
    <property type="evidence" value="ECO:0007669"/>
    <property type="project" value="InterPro"/>
</dbReference>
<dbReference type="GO" id="GO:0004222">
    <property type="term" value="F:metalloendopeptidase activity"/>
    <property type="evidence" value="ECO:0007669"/>
    <property type="project" value="InterPro"/>
</dbReference>
<dbReference type="GO" id="GO:0008320">
    <property type="term" value="F:protein transmembrane transporter activity"/>
    <property type="evidence" value="ECO:0007669"/>
    <property type="project" value="InterPro"/>
</dbReference>
<dbReference type="GO" id="GO:0090729">
    <property type="term" value="F:toxin activity"/>
    <property type="evidence" value="ECO:0000314"/>
    <property type="project" value="UniProtKB"/>
</dbReference>
<dbReference type="GO" id="GO:0008270">
    <property type="term" value="F:zinc ion binding"/>
    <property type="evidence" value="ECO:0007669"/>
    <property type="project" value="InterPro"/>
</dbReference>
<dbReference type="GO" id="GO:0006508">
    <property type="term" value="P:proteolysis"/>
    <property type="evidence" value="ECO:0000314"/>
    <property type="project" value="UniProtKB"/>
</dbReference>
<dbReference type="CDD" id="cd23396">
    <property type="entry name" value="Toxin_R_bind_C_BoNTX_like"/>
    <property type="match status" value="1"/>
</dbReference>
<dbReference type="Gene3D" id="2.60.120.200">
    <property type="match status" value="1"/>
</dbReference>
<dbReference type="Gene3D" id="2.80.10.50">
    <property type="match status" value="1"/>
</dbReference>
<dbReference type="Gene3D" id="1.20.1120.10">
    <property type="entry name" value="Clostridium botulinum neurotoxin b, 'coiled-coil' domain"/>
    <property type="match status" value="1"/>
</dbReference>
<dbReference type="Gene3D" id="3.90.1240.10">
    <property type="entry name" value="Metalloproteases ('zincins'), catalytic domain like"/>
    <property type="match status" value="1"/>
</dbReference>
<dbReference type="InterPro" id="IPR000395">
    <property type="entry name" value="Bot/tetX_LC"/>
</dbReference>
<dbReference type="InterPro" id="IPR036248">
    <property type="entry name" value="Clostridium_toxin_transloc"/>
</dbReference>
<dbReference type="InterPro" id="IPR013320">
    <property type="entry name" value="ConA-like_dom_sf"/>
</dbReference>
<dbReference type="InterPro" id="IPR011065">
    <property type="entry name" value="Kunitz_inhibitor_STI-like_sf"/>
</dbReference>
<dbReference type="InterPro" id="IPR012928">
    <property type="entry name" value="Toxin_rcpt-bd_N"/>
</dbReference>
<dbReference type="InterPro" id="IPR012500">
    <property type="entry name" value="Toxin_trans"/>
</dbReference>
<dbReference type="Pfam" id="PF01742">
    <property type="entry name" value="Peptidase_M27"/>
    <property type="match status" value="1"/>
</dbReference>
<dbReference type="Pfam" id="PF07953">
    <property type="entry name" value="Toxin_R_bind_N"/>
    <property type="match status" value="1"/>
</dbReference>
<dbReference type="Pfam" id="PF07952">
    <property type="entry name" value="Toxin_trans"/>
    <property type="match status" value="1"/>
</dbReference>
<dbReference type="PRINTS" id="PR00760">
    <property type="entry name" value="BONTOXILYSIN"/>
</dbReference>
<dbReference type="SUPFAM" id="SSF58091">
    <property type="entry name" value="Clostridium neurotoxins, 'coiled-coil' domain"/>
    <property type="match status" value="1"/>
</dbReference>
<dbReference type="SUPFAM" id="SSF49899">
    <property type="entry name" value="Concanavalin A-like lectins/glucanases"/>
    <property type="match status" value="1"/>
</dbReference>
<dbReference type="SUPFAM" id="SSF55486">
    <property type="entry name" value="Metalloproteases ('zincins'), catalytic domain"/>
    <property type="match status" value="1"/>
</dbReference>
<dbReference type="SUPFAM" id="SSF50386">
    <property type="entry name" value="STI-like"/>
    <property type="match status" value="1"/>
</dbReference>
<dbReference type="PROSITE" id="PS00142">
    <property type="entry name" value="ZINC_PROTEASE"/>
    <property type="match status" value="1"/>
</dbReference>
<keyword id="KW-0002">3D-structure</keyword>
<keyword id="KW-1015">Disulfide bond</keyword>
<keyword id="KW-0378">Hydrolase</keyword>
<keyword id="KW-0479">Metal-binding</keyword>
<keyword id="KW-0482">Metalloprotease</keyword>
<keyword id="KW-0528">Neurotoxin</keyword>
<keyword id="KW-0614">Plasmid</keyword>
<keyword id="KW-0645">Protease</keyword>
<keyword id="KW-0800">Toxin</keyword>
<keyword id="KW-0843">Virulence</keyword>
<keyword id="KW-0862">Zinc</keyword>
<comment type="function">
    <molecule>Paraclostridial mosquitocidal protein 1</molecule>
    <text evidence="2">Neurotoxin active against Anopheles but not Aedes mosquitoes upon oral ingestion; expression of the ptox operon (ntnh-orfX1-orfX2-orfX3-pmp1) in B.thuringiensis kills Anopheles but not Aedes mosquito 3rd instar larvae. The ntnh-pmp1 construct is about half as toxic. PMP1 is toxic when injected directly into Anopheles or Aedes mosquito 3rd instar larvae, larvae no longer move, suggesting they are paralyzed. Adult mosquitoes (Anopheles or Aedes) and Drosophila lose the ability to fly in a dose-dependent manner by 24 hours after injection with 100 pg neurotoxin. Not toxic upon injection in mice.</text>
</comment>
<comment type="function">
    <molecule>Paraclostridial mosquitocidal protein 1 light chain</molecule>
    <text evidence="2">Neurotoxin that cleaves A.gambiae syntaxin 1a, probably hydrolyzing the '240-Glu-|-His-241' bond. Does not cleave A.gambiae n-synaptobrevin or SNAP-25, nor human syntaxin 1A.</text>
</comment>
<comment type="function">
    <molecule>Paraclostridial mosquitocidal protein 1 heavy chain</molecule>
    <text evidence="1">Responsible for host epithelial cell transcytosis, host nerve cell targeting and translocation of PMP1 light chain (LC) into host cytosol. Composed of 3 subdomains; the translocation domain (TD), and N-terminus and C-terminus of the receptor-binding domain (RBD), called HCN and HCC.</text>
</comment>
<comment type="catalytic activity">
    <reaction evidence="2">
        <text>Limited hydrolysis of proteins of the neuroexocytosis apparatus, synaptobrevins, SNAP25 or syntaxin. No detected action on small molecule substrates.</text>
        <dbReference type="EC" id="3.4.24.69"/>
    </reaction>
</comment>
<comment type="cofactor">
    <cofactor evidence="1">
        <name>Zn(2+)</name>
        <dbReference type="ChEBI" id="CHEBI:29105"/>
    </cofactor>
</comment>
<comment type="activity regulation">
    <text evidence="2">Preincubation with the metalloprotease inhibitor 1,10-phenanthroline before injection into Anopheles or Aedes decreases toxicity.</text>
</comment>
<comment type="induction">
    <text evidence="2">Detected as an approximately 140 kDa protein in bacteria (at protein level). Part of a high-molecular weight complex with other proteins from the ptox and cry loci. Encoded in the ptox locus, possibly in an ntnh-orfX1-orfX2-orfX3-pmp1 operon. Antibodies were raised against a peptide in the heavy chain (residues 422-435).</text>
</comment>
<comment type="domain">
    <molecule>Paraclostridial mosquitocidal protein 1 light chain</molecule>
    <text evidence="2">Has protease activity which is probably neurotoxic.</text>
</comment>
<comment type="domain">
    <molecule>Paraclostridial mosquitocidal protein 1 heavy chain</molecule>
    <text evidence="1 2">Has 3 functional domains; the translocation domain (TD) and the receptor-binding domain (RBD) which is further subdivided into N- and C-terminal domains (HCN and HCC) (By similarity). HCN has a lectin-like fold, HCC is the main region associated with cell recognition. Probably recognizes host cells via other residues than Clostrial botulinum-type toxins, as conserved residues important for ganglioside recognition can be mutated with little effect (PubMed:31253776).</text>
</comment>
<comment type="toxic dose">
    <text evidence="2">LD(50) is 14 pg (98 amol) per Aedes 3rd instar larve when injected directly between the head and thorax.</text>
</comment>
<comment type="toxic dose">
    <text evidence="2">LD(50) is 6.5 pg (44.5 amol) per Anopheles 3rd instar larve when injected directly between the head and thorax.</text>
</comment>
<comment type="biotechnology">
    <text evidence="2">Identification of mosquitocidal P.bifermentans strains in regions where mosquito-borne diseases are endemic could help control mosquito populations. No mammalian toxicity was detected.</text>
</comment>
<comment type="miscellaneous">
    <text evidence="2">Feeding larvae with P.bifermentans strain Cbm (subsp. malaysia) is toxic to Anopheles mosquito 3rd instar larvae and less toxic to Aedes aegypti larvae. The presence of 4 plasmids, including this one, is required to kill mosquito larvae.</text>
</comment>
<comment type="similarity">
    <text evidence="4">Belongs to the peptidase M27 family.</text>
</comment>
<accession>A0A5P3XKQ1</accession>
<accession>A0A5H1ZR34</accession>
<proteinExistence type="evidence at protein level"/>
<feature type="chain" id="PRO_0000457877" description="Paraclostridial mosquitocidal protein 1">
    <location>
        <begin position="1"/>
        <end position="1260"/>
    </location>
</feature>
<feature type="chain" id="PRO_0000457878" description="Paraclostridial mosquitocidal protein 1 light chain" evidence="1">
    <location>
        <begin position="1"/>
        <end position="400"/>
    </location>
</feature>
<feature type="chain" id="PRO_0000457879" description="Paraclostridial mosquitocidal protein 1 heavy chain" evidence="1">
    <location>
        <begin position="401"/>
        <end position="1260"/>
    </location>
</feature>
<feature type="region of interest" description="Translocation domain (TD)" evidence="1">
    <location>
        <begin position="401"/>
        <end position="824"/>
    </location>
</feature>
<feature type="region of interest" description="HCN" evidence="2">
    <location>
        <begin position="825"/>
        <end position="1065"/>
    </location>
</feature>
<feature type="region of interest" description="HCC" evidence="2">
    <location>
        <begin position="1066"/>
        <end position="1260"/>
    </location>
</feature>
<feature type="active site" description="Proton acceptor" evidence="1">
    <location>
        <position position="209"/>
    </location>
</feature>
<feature type="binding site" evidence="1">
    <location>
        <position position="208"/>
    </location>
    <ligand>
        <name>Zn(2+)</name>
        <dbReference type="ChEBI" id="CHEBI:29105"/>
        <note>catalytic</note>
    </ligand>
</feature>
<feature type="binding site" evidence="1">
    <location>
        <position position="212"/>
    </location>
    <ligand>
        <name>Zn(2+)</name>
        <dbReference type="ChEBI" id="CHEBI:29105"/>
        <note>catalytic</note>
    </ligand>
</feature>
<feature type="binding site" evidence="1">
    <location>
        <position position="248"/>
    </location>
    <ligand>
        <name>Zn(2+)</name>
        <dbReference type="ChEBI" id="CHEBI:29105"/>
        <note>catalytic</note>
    </ligand>
</feature>
<feature type="disulfide bond" description="Interchain (between light and heavy chains)" evidence="4">
    <location>
        <begin position="395"/>
        <end position="406"/>
    </location>
</feature>
<feature type="mutagenesis site" description="Not toxic upon injection in Aedes 3rd instar larvae, does not cleave Anopheles mosquito synaxin 1A (in an LC construct)." evidence="2">
    <original>E</original>
    <variation>Q</variation>
    <location>
        <position position="209"/>
    </location>
</feature>
<feature type="mutagenesis site" description="Nearly abolishes toxicity when injected into A.aegypti larvae." evidence="2">
    <original>SWYG</original>
    <variation>AAAA</variation>
    <location>
        <begin position="1095"/>
        <end position="1098"/>
    </location>
</feature>
<feature type="mutagenesis site" description="70% reduced toxicity when injected into A.aegypti larvae." evidence="2">
    <original>W</original>
    <variation>A</variation>
    <location>
        <position position="1096"/>
    </location>
</feature>
<feature type="mutagenesis site" description="Nearly abolishes toxicity when injected into A.aegypti larvae; when associated with A-1173 and A-1227." evidence="2">
    <original>YY</original>
    <variation>DD</variation>
    <location>
        <begin position="1100"/>
        <end position="1101"/>
    </location>
</feature>
<feature type="mutagenesis site" description="30% reduced toxicity when injected into A.aegypti larvae; when associated with A-1204-1205-D." evidence="2">
    <original>MY</original>
    <variation>AD</variation>
    <location>
        <begin position="1165"/>
        <end position="1166"/>
    </location>
</feature>
<feature type="mutagenesis site" description="20% reduced toxicity when injected into A.aegypti larvae." evidence="2">
    <original>KIKE</original>
    <variation>AAAA</variation>
    <location>
        <begin position="1168"/>
        <end position="1171"/>
    </location>
</feature>
<feature type="mutagenesis site" description="Nearly abolishes toxicity when injected into A.aegypti larvae; when associated with A-1100-1101-A and A-1227." evidence="2">
    <original>Y</original>
    <variation>A</variation>
    <location>
        <position position="1173"/>
    </location>
</feature>
<feature type="mutagenesis site" description="No change in toxicity when injected into A.aegypti larvae." evidence="2">
    <original>F</original>
    <variation>A</variation>
    <location>
        <position position="1202"/>
    </location>
</feature>
<feature type="mutagenesis site" description="30% reduced toxicity when injected into A.aegypti larvae; when associated with A-1165-1166-D." evidence="2">
    <original>MY</original>
    <variation>AD</variation>
    <location>
        <begin position="1204"/>
        <end position="1205"/>
    </location>
</feature>
<feature type="mutagenesis site" description="No change in toxicity when injected into A.aegypti larvae." evidence="2">
    <original>W</original>
    <variation>A</variation>
    <location>
        <position position="1218"/>
    </location>
</feature>
<feature type="mutagenesis site" description="No change in toxicity when injected into A.aegypti larvae." evidence="2">
    <original>W</original>
    <variation>A</variation>
    <location>
        <position position="1224"/>
    </location>
</feature>
<feature type="mutagenesis site" description="Nearly abolishes toxicity when injected into A.aegypti larvae; when associated with A-1100-1101-A and A-1173." evidence="2">
    <original>Y</original>
    <variation>A</variation>
    <location>
        <position position="1227"/>
    </location>
</feature>
<feature type="mutagenesis site" description="No change in toxicity when injected into A.aegypti larvae." evidence="2">
    <original>S</original>
    <variation>D</variation>
    <location>
        <position position="1229"/>
    </location>
</feature>
<feature type="mutagenesis site" description="No change in toxicity when injected into A.aegypti larvae." evidence="2">
    <original>W</original>
    <variation>A</variation>
    <location>
        <position position="1231"/>
    </location>
</feature>
<feature type="helix" evidence="7">
    <location>
        <begin position="835"/>
        <end position="838"/>
    </location>
</feature>
<feature type="strand" evidence="7">
    <location>
        <begin position="839"/>
        <end position="846"/>
    </location>
</feature>
<feature type="strand" evidence="7">
    <location>
        <begin position="849"/>
        <end position="852"/>
    </location>
</feature>
<feature type="strand" evidence="7">
    <location>
        <begin position="860"/>
        <end position="862"/>
    </location>
</feature>
<feature type="strand" evidence="7">
    <location>
        <begin position="867"/>
        <end position="870"/>
    </location>
</feature>
<feature type="strand" evidence="7">
    <location>
        <begin position="872"/>
        <end position="882"/>
    </location>
</feature>
<feature type="strand" evidence="7">
    <location>
        <begin position="887"/>
        <end position="889"/>
    </location>
</feature>
<feature type="strand" evidence="7">
    <location>
        <begin position="893"/>
        <end position="895"/>
    </location>
</feature>
<feature type="strand" evidence="7">
    <location>
        <begin position="903"/>
        <end position="911"/>
    </location>
</feature>
<feature type="helix" evidence="7">
    <location>
        <begin position="916"/>
        <end position="921"/>
    </location>
</feature>
<feature type="strand" evidence="7">
    <location>
        <begin position="926"/>
        <end position="942"/>
    </location>
</feature>
<feature type="strand" evidence="7">
    <location>
        <begin position="945"/>
        <end position="951"/>
    </location>
</feature>
<feature type="strand" evidence="7">
    <location>
        <begin position="957"/>
        <end position="961"/>
    </location>
</feature>
<feature type="helix" evidence="7">
    <location>
        <begin position="966"/>
        <end position="969"/>
    </location>
</feature>
<feature type="turn" evidence="7">
    <location>
        <begin position="970"/>
        <end position="973"/>
    </location>
</feature>
<feature type="strand" evidence="7">
    <location>
        <begin position="975"/>
        <end position="979"/>
    </location>
</feature>
<feature type="strand" evidence="7">
    <location>
        <begin position="981"/>
        <end position="988"/>
    </location>
</feature>
<feature type="turn" evidence="7">
    <location>
        <begin position="989"/>
        <end position="991"/>
    </location>
</feature>
<feature type="strand" evidence="7">
    <location>
        <begin position="992"/>
        <end position="997"/>
    </location>
</feature>
<feature type="strand" evidence="7">
    <location>
        <begin position="1000"/>
        <end position="1006"/>
    </location>
</feature>
<feature type="strand" evidence="7">
    <location>
        <begin position="1019"/>
        <end position="1025"/>
    </location>
</feature>
<feature type="strand" evidence="7">
    <location>
        <begin position="1032"/>
        <end position="1043"/>
    </location>
</feature>
<feature type="helix" evidence="7">
    <location>
        <begin position="1047"/>
        <end position="1055"/>
    </location>
</feature>
<feature type="helix" evidence="7">
    <location>
        <begin position="1056"/>
        <end position="1058"/>
    </location>
</feature>
<feature type="strand" evidence="7">
    <location>
        <begin position="1068"/>
        <end position="1070"/>
    </location>
</feature>
<feature type="strand" evidence="7">
    <location>
        <begin position="1077"/>
        <end position="1081"/>
    </location>
</feature>
<feature type="strand" evidence="7">
    <location>
        <begin position="1089"/>
        <end position="1094"/>
    </location>
</feature>
<feature type="turn" evidence="7">
    <location>
        <begin position="1095"/>
        <end position="1098"/>
    </location>
</feature>
<feature type="strand" evidence="7">
    <location>
        <begin position="1099"/>
        <end position="1105"/>
    </location>
</feature>
<feature type="strand" evidence="7">
    <location>
        <begin position="1109"/>
        <end position="1113"/>
    </location>
</feature>
<feature type="strand" evidence="7">
    <location>
        <begin position="1116"/>
        <end position="1119"/>
    </location>
</feature>
<feature type="strand" evidence="7">
    <location>
        <begin position="1131"/>
        <end position="1134"/>
    </location>
</feature>
<feature type="strand" evidence="7">
    <location>
        <begin position="1139"/>
        <end position="1142"/>
    </location>
</feature>
<feature type="strand" evidence="7">
    <location>
        <begin position="1150"/>
        <end position="1153"/>
    </location>
</feature>
<feature type="turn" evidence="7">
    <location>
        <begin position="1154"/>
        <end position="1156"/>
    </location>
</feature>
<feature type="strand" evidence="7">
    <location>
        <begin position="1160"/>
        <end position="1162"/>
    </location>
</feature>
<feature type="turn" evidence="7">
    <location>
        <begin position="1166"/>
        <end position="1168"/>
    </location>
</feature>
<feature type="strand" evidence="7">
    <location>
        <begin position="1175"/>
        <end position="1179"/>
    </location>
</feature>
<feature type="strand" evidence="7">
    <location>
        <begin position="1182"/>
        <end position="1187"/>
    </location>
</feature>
<feature type="strand" evidence="7">
    <location>
        <begin position="1197"/>
        <end position="1202"/>
    </location>
</feature>
<feature type="turn" evidence="7">
    <location>
        <begin position="1204"/>
        <end position="1206"/>
    </location>
</feature>
<feature type="strand" evidence="7">
    <location>
        <begin position="1208"/>
        <end position="1212"/>
    </location>
</feature>
<feature type="strand" evidence="7">
    <location>
        <begin position="1223"/>
        <end position="1229"/>
    </location>
</feature>
<feature type="helix" evidence="7">
    <location>
        <begin position="1230"/>
        <end position="1234"/>
    </location>
</feature>
<feature type="helix" evidence="7">
    <location>
        <begin position="1236"/>
        <end position="1238"/>
    </location>
</feature>
<feature type="helix" evidence="7">
    <location>
        <begin position="1241"/>
        <end position="1246"/>
    </location>
</feature>
<feature type="strand" evidence="7">
    <location>
        <begin position="1249"/>
        <end position="1252"/>
    </location>
</feature>
<protein>
    <recommendedName>
        <fullName evidence="3">Paraclostridial mosquitocidal protein 1</fullName>
        <shortName evidence="3">PMP1</shortName>
    </recommendedName>
    <component>
        <recommendedName>
            <fullName evidence="3">Paraclostridial mosquitocidal protein 1 light chain</fullName>
            <shortName evidence="3">LC</shortName>
            <ecNumber evidence="2">3.4.24.69</ecNumber>
        </recommendedName>
    </component>
    <component>
        <recommendedName>
            <fullName evidence="3">Paraclostridial mosquitocidal protein 1 heavy chain</fullName>
            <shortName evidence="3">HC</shortName>
        </recommendedName>
    </component>
</protein>
<organism>
    <name type="scientific">Paraclostridium bifermentans</name>
    <name type="common">Clostridium bifermentans</name>
    <dbReference type="NCBI Taxonomy" id="1490"/>
    <lineage>
        <taxon>Bacteria</taxon>
        <taxon>Bacillati</taxon>
        <taxon>Bacillota</taxon>
        <taxon>Clostridia</taxon>
        <taxon>Peptostreptococcales</taxon>
        <taxon>Peptostreptococcaceae</taxon>
        <taxon>Paraclostridium</taxon>
    </lineage>
</organism>
<reference evidence="5 6" key="1">
    <citation type="journal article" date="2019" name="Nat. Commun.">
        <title>A neurotoxin that specifically targets Anopheles mosquitoes.</title>
        <authorList>
            <person name="Contreras E."/>
            <person name="Masuyer G."/>
            <person name="Qureshi N."/>
            <person name="Chawla S."/>
            <person name="Dhillon H.S."/>
            <person name="Lee H.L."/>
            <person name="Chen J."/>
            <person name="Stenmark P."/>
            <person name="Gill S.S."/>
        </authorList>
    </citation>
    <scope>NUCLEOTIDE SEQUENCE [LARGE SCALE GENOMIC DNA]</scope>
    <scope>X-RAY CRYSTALLOGRAPHY (1.95 ANGSTROMS) OF 825-1260</scope>
    <scope>FUNCTION</scope>
    <scope>CATALYTIC ACTIVITY</scope>
    <scope>ACTIVITY REGULATION</scope>
    <scope>INDUCTION</scope>
    <scope>IDENTIFICATION BY MASS SPECTROMETRY</scope>
    <scope>DOMAIN</scope>
    <scope>TOXIC DOSE</scope>
    <scope>MUTAGENESIS OF GLU-209; 1095-SER--GLY-1098; TRP-1096; 1100-TYR-TYR-1101; 1165-MET-TYR-1166; 1168-LYS--GLU-1171; TYR-1173; PHE-1202; 1204-MET-TYR-1205; TRP-1218; TRP-1224; TYR-1227; SER-1229 AND TRP-1231</scope>
    <source>
        <strain>Cbm</strain>
        <plasmid>pPbmMP</plasmid>
    </source>
</reference>
<geneLocation type="plasmid">
    <name>pPbmMP</name>
</geneLocation>
<evidence type="ECO:0000250" key="1">
    <source>
        <dbReference type="UniProtKB" id="P0DPI0"/>
    </source>
</evidence>
<evidence type="ECO:0000269" key="2">
    <source>
    </source>
</evidence>
<evidence type="ECO:0000303" key="3">
    <source>
    </source>
</evidence>
<evidence type="ECO:0000305" key="4">
    <source>
    </source>
</evidence>
<evidence type="ECO:0000312" key="5">
    <source>
        <dbReference type="EMBL" id="QEZ70852.1"/>
    </source>
</evidence>
<evidence type="ECO:0007744" key="6">
    <source>
        <dbReference type="PDB" id="6HOX"/>
    </source>
</evidence>
<evidence type="ECO:0007829" key="7">
    <source>
        <dbReference type="PDB" id="6HOX"/>
    </source>
</evidence>
<sequence length="1260" mass="146320">MLQIRVFNYNDPIDGENIVELRYHNRSPVKAFQIVDGIWIIPERYNFTNDTKKVPDDRALTILEDEVFAVRENDYLTTDVNEKNSFLNNITKLFKRINSSNIGNQLLNYISTSVPYPVVSTNSIKARDYNTIKFDSIDGRRITKSANVLIYGPSMKNLLDKQTRAINGEEAKNGIGCLSDIIFSPNYLSVQTVSSSRFVEDPASSLTHELIHALHNLYGIQYPGEEKFKFGGFIDKLLGTRECIDYEEVLTYGGKDSEIIRKKIDKSLYPDDFVNKYGEMYKRIKGSNPYYPDEKKLKQSFLNRMNPFDQNGTFDTKEFKNHLMDLWFGLNESEFAKEKKILVRKHYITKQINPKYTELTNDVYTEDKGFVNGQSIDNQNFKIIDDLISKKVKLCSITSKNRVNICIDVNKEDLYFISDKEGFENIDFSEPEIRYDSNVTTATTSSFTDHFLVNRTFNDSDRFPPVELEYAIEPAEIVDNTIMPDIDQKSEISLDNLTTFHYLNAQKMDLGFDSSKEQLKMVTSIEESLLDSKKVYTPFTRTAHSVNERISGIAESYLFYQWLKTVINDFTDELNQKSNTDKVADISWIIPYVGPALNIGLDLSHGDFTKAFEDLGVSILFAIAPEFATISLVALSIYENIEEDSQKEKVINKVENTLARRIEKWHQVYAFMVAQWWGMVHTQIDTRIHQMYESLSHQIIAIKANMEYQLSHYKGPDNDKLLLKDYIYEAEIALNTSANRAMKNIERFMIESSISYLKNNLIPSVVENLKKFDADTKKNLDQFIDKNSSVLGSDLHILKSQVDLELNPTTKVAFNIQSIPDFDINALIDRLGIQLKDNLVFSLGVESDKIKDLSGNNTNLEVKTGVQIVDGRDSKTIRLNSNENSSIIVQKNESINFSYFSDFTISFWIRVPRLNKNDFIDLGIEYDLVNNMDNQGWKISLKDGNLVWRMKDRFGKIIDIITSLTFSNSFIDKYISSNIWRHITITVNQLKDCTLYINGDKIDSKSINELRGIDNNSPIIFKLEGNRNKNQFIRLDQFNIYQRALNESEVEMLFNSYFNSNILRDFWGEPLEYNKSYYMINQAILGGPLRSTYKSWYGEYYPYISRMRTFNVSSFILIPYLYHKGSDVEKVKIINKNNVDKYVRKNDVADVKFENYGNLILTLPMYSKIKERYMVLNEGRNGDLKLIQLQSNDKYYCQIRIFEMYRNGLLSIADDENWLYSSGWYLYSSGWYLDNYKTLDLKKHTKTNWYFVSEDEGWKE</sequence>
<gene>
    <name evidence="3" type="primary">pmp1</name>
    <name evidence="5" type="ORF">D4A35_18120</name>
</gene>
<name>PMP1_PARBF</name>